<evidence type="ECO:0000255" key="1">
    <source>
        <dbReference type="HAMAP-Rule" id="MF_01851"/>
    </source>
</evidence>
<gene>
    <name type="primary">ysbB</name>
    <name type="ordered locus">LL1754</name>
    <name type="ORF">L195366</name>
</gene>
<name>YSBB_LACLA</name>
<feature type="chain" id="PRO_0000348310" description="UPF0637 protein YsbB">
    <location>
        <begin position="1"/>
        <end position="199"/>
    </location>
</feature>
<proteinExistence type="inferred from homology"/>
<sequence length="199" mass="23382">MFTQKSFEIFKIEGLEPRMTEIRSEIQPVFSEIGQKLLTELSVKIPNQEFYFHIAQHRRRTANAPENTWSAISTKVRGYKMEAHFQLGIWEDYVFIYLSMIDQPKKQKEYANLLTSLSVEKLLTEDFVISKDHTKAETYPLSAFREAAERLGKVKKSELEIGRVWPKERFNSKEDSIILAEMIETIDQLLPIYQKLMEV</sequence>
<reference key="1">
    <citation type="journal article" date="2001" name="Genome Res.">
        <title>The complete genome sequence of the lactic acid bacterium Lactococcus lactis ssp. lactis IL1403.</title>
        <authorList>
            <person name="Bolotin A."/>
            <person name="Wincker P."/>
            <person name="Mauger S."/>
            <person name="Jaillon O."/>
            <person name="Malarme K."/>
            <person name="Weissenbach J."/>
            <person name="Ehrlich S.D."/>
            <person name="Sorokin A."/>
        </authorList>
    </citation>
    <scope>NUCLEOTIDE SEQUENCE [LARGE SCALE GENOMIC DNA]</scope>
    <source>
        <strain>IL1403</strain>
    </source>
</reference>
<protein>
    <recommendedName>
        <fullName evidence="1">UPF0637 protein YsbB</fullName>
    </recommendedName>
</protein>
<organism>
    <name type="scientific">Lactococcus lactis subsp. lactis (strain IL1403)</name>
    <name type="common">Streptococcus lactis</name>
    <dbReference type="NCBI Taxonomy" id="272623"/>
    <lineage>
        <taxon>Bacteria</taxon>
        <taxon>Bacillati</taxon>
        <taxon>Bacillota</taxon>
        <taxon>Bacilli</taxon>
        <taxon>Lactobacillales</taxon>
        <taxon>Streptococcaceae</taxon>
        <taxon>Lactococcus</taxon>
    </lineage>
</organism>
<keyword id="KW-1185">Reference proteome</keyword>
<dbReference type="EMBL" id="AE005176">
    <property type="protein sequence ID" value="AAK05852.1"/>
    <property type="molecule type" value="Genomic_DNA"/>
</dbReference>
<dbReference type="PIR" id="B86844">
    <property type="entry name" value="B86844"/>
</dbReference>
<dbReference type="RefSeq" id="NP_267910.1">
    <property type="nucleotide sequence ID" value="NC_002662.1"/>
</dbReference>
<dbReference type="RefSeq" id="WP_010906121.1">
    <property type="nucleotide sequence ID" value="NC_002662.1"/>
</dbReference>
<dbReference type="SMR" id="Q9CET0"/>
<dbReference type="PaxDb" id="272623-L195366"/>
<dbReference type="EnsemblBacteria" id="AAK05852">
    <property type="protein sequence ID" value="AAK05852"/>
    <property type="gene ID" value="L195366"/>
</dbReference>
<dbReference type="KEGG" id="lla:L195366"/>
<dbReference type="PATRIC" id="fig|272623.7.peg.1880"/>
<dbReference type="eggNOG" id="COG4493">
    <property type="taxonomic scope" value="Bacteria"/>
</dbReference>
<dbReference type="HOGENOM" id="CLU_096059_0_0_9"/>
<dbReference type="OrthoDB" id="9812818at2"/>
<dbReference type="Proteomes" id="UP000002196">
    <property type="component" value="Chromosome"/>
</dbReference>
<dbReference type="Gene3D" id="3.30.930.20">
    <property type="entry name" value="Protein of unknown function DUF1054"/>
    <property type="match status" value="1"/>
</dbReference>
<dbReference type="HAMAP" id="MF_01851">
    <property type="entry name" value="UPF0637"/>
    <property type="match status" value="1"/>
</dbReference>
<dbReference type="InterPro" id="IPR009403">
    <property type="entry name" value="UPF0637"/>
</dbReference>
<dbReference type="InterPro" id="IPR053707">
    <property type="entry name" value="UPF0637_domain_sf"/>
</dbReference>
<dbReference type="Pfam" id="PF06335">
    <property type="entry name" value="DUF1054"/>
    <property type="match status" value="1"/>
</dbReference>
<dbReference type="PIRSF" id="PIRSF021332">
    <property type="entry name" value="DUF1054"/>
    <property type="match status" value="1"/>
</dbReference>
<dbReference type="SUPFAM" id="SSF142913">
    <property type="entry name" value="YktB/PF0168-like"/>
    <property type="match status" value="1"/>
</dbReference>
<accession>Q9CET0</accession>
<comment type="similarity">
    <text evidence="1">Belongs to the UPF0637 family.</text>
</comment>